<gene>
    <name type="ordered locus">Synpcc7942_2398</name>
</gene>
<accession>Q31KJ1</accession>
<organism>
    <name type="scientific">Synechococcus elongatus (strain ATCC 33912 / PCC 7942 / FACHB-805)</name>
    <name type="common">Anacystis nidulans R2</name>
    <dbReference type="NCBI Taxonomy" id="1140"/>
    <lineage>
        <taxon>Bacteria</taxon>
        <taxon>Bacillati</taxon>
        <taxon>Cyanobacteriota</taxon>
        <taxon>Cyanophyceae</taxon>
        <taxon>Synechococcales</taxon>
        <taxon>Synechococcaceae</taxon>
        <taxon>Synechococcus</taxon>
    </lineage>
</organism>
<reference key="1">
    <citation type="submission" date="2005-08" db="EMBL/GenBank/DDBJ databases">
        <title>Complete sequence of chromosome 1 of Synechococcus elongatus PCC 7942.</title>
        <authorList>
            <consortium name="US DOE Joint Genome Institute"/>
            <person name="Copeland A."/>
            <person name="Lucas S."/>
            <person name="Lapidus A."/>
            <person name="Barry K."/>
            <person name="Detter J.C."/>
            <person name="Glavina T."/>
            <person name="Hammon N."/>
            <person name="Israni S."/>
            <person name="Pitluck S."/>
            <person name="Schmutz J."/>
            <person name="Larimer F."/>
            <person name="Land M."/>
            <person name="Kyrpides N."/>
            <person name="Lykidis A."/>
            <person name="Golden S."/>
            <person name="Richardson P."/>
        </authorList>
    </citation>
    <scope>NUCLEOTIDE SEQUENCE [LARGE SCALE GENOMIC DNA]</scope>
    <source>
        <strain>ATCC 33912 / PCC 7942 / FACHB-805</strain>
    </source>
</reference>
<sequence>MPYYAALGLDVGRRRIGVAGCDRLGITVQGLTTIVRRDFASDVAAISAIAKERQVELLVIGLPYSMDGSLGSQAKQTQRFATRLSKALQLPITYVDERLTSFEAEEMIKAEGRSPSRDKGAIDRKAAALILQQWLDEQREPRRFGSTQH</sequence>
<keyword id="KW-0963">Cytoplasm</keyword>
<keyword id="KW-0378">Hydrolase</keyword>
<keyword id="KW-0540">Nuclease</keyword>
<keyword id="KW-1185">Reference proteome</keyword>
<keyword id="KW-0690">Ribosome biogenesis</keyword>
<comment type="function">
    <text evidence="1">Could be a nuclease involved in processing of the 5'-end of pre-16S rRNA.</text>
</comment>
<comment type="subcellular location">
    <subcellularLocation>
        <location evidence="1">Cytoplasm</location>
    </subcellularLocation>
</comment>
<comment type="similarity">
    <text evidence="1">Belongs to the YqgF nuclease family.</text>
</comment>
<feature type="chain" id="PRO_0000257609" description="Putative pre-16S rRNA nuclease">
    <location>
        <begin position="1"/>
        <end position="149"/>
    </location>
</feature>
<dbReference type="EC" id="3.1.-.-" evidence="1"/>
<dbReference type="EMBL" id="CP000100">
    <property type="protein sequence ID" value="ABB58428.1"/>
    <property type="molecule type" value="Genomic_DNA"/>
</dbReference>
<dbReference type="SMR" id="Q31KJ1"/>
<dbReference type="STRING" id="1140.Synpcc7942_2398"/>
<dbReference type="PaxDb" id="1140-Synpcc7942_2398"/>
<dbReference type="KEGG" id="syf:Synpcc7942_2398"/>
<dbReference type="eggNOG" id="COG0816">
    <property type="taxonomic scope" value="Bacteria"/>
</dbReference>
<dbReference type="HOGENOM" id="CLU_098240_2_0_3"/>
<dbReference type="OrthoDB" id="9796140at2"/>
<dbReference type="BioCyc" id="SYNEL:SYNPCC7942_2398-MONOMER"/>
<dbReference type="Proteomes" id="UP000889800">
    <property type="component" value="Chromosome"/>
</dbReference>
<dbReference type="GO" id="GO:0005829">
    <property type="term" value="C:cytosol"/>
    <property type="evidence" value="ECO:0007669"/>
    <property type="project" value="TreeGrafter"/>
</dbReference>
<dbReference type="GO" id="GO:0004518">
    <property type="term" value="F:nuclease activity"/>
    <property type="evidence" value="ECO:0007669"/>
    <property type="project" value="UniProtKB-KW"/>
</dbReference>
<dbReference type="GO" id="GO:0000967">
    <property type="term" value="P:rRNA 5'-end processing"/>
    <property type="evidence" value="ECO:0007669"/>
    <property type="project" value="UniProtKB-UniRule"/>
</dbReference>
<dbReference type="CDD" id="cd16964">
    <property type="entry name" value="YqgF"/>
    <property type="match status" value="1"/>
</dbReference>
<dbReference type="Gene3D" id="3.30.420.140">
    <property type="entry name" value="YqgF/RNase H-like domain"/>
    <property type="match status" value="1"/>
</dbReference>
<dbReference type="HAMAP" id="MF_00651">
    <property type="entry name" value="Nuclease_YqgF"/>
    <property type="match status" value="1"/>
</dbReference>
<dbReference type="InterPro" id="IPR012337">
    <property type="entry name" value="RNaseH-like_sf"/>
</dbReference>
<dbReference type="InterPro" id="IPR005227">
    <property type="entry name" value="YqgF"/>
</dbReference>
<dbReference type="InterPro" id="IPR006641">
    <property type="entry name" value="YqgF/RNaseH-like_dom"/>
</dbReference>
<dbReference type="InterPro" id="IPR037027">
    <property type="entry name" value="YqgF/RNaseH-like_dom_sf"/>
</dbReference>
<dbReference type="NCBIfam" id="TIGR00250">
    <property type="entry name" value="RNAse_H_YqgF"/>
    <property type="match status" value="1"/>
</dbReference>
<dbReference type="PANTHER" id="PTHR33317">
    <property type="entry name" value="POLYNUCLEOTIDYL TRANSFERASE, RIBONUCLEASE H-LIKE SUPERFAMILY PROTEIN"/>
    <property type="match status" value="1"/>
</dbReference>
<dbReference type="PANTHER" id="PTHR33317:SF4">
    <property type="entry name" value="POLYNUCLEOTIDYL TRANSFERASE, RIBONUCLEASE H-LIKE SUPERFAMILY PROTEIN"/>
    <property type="match status" value="1"/>
</dbReference>
<dbReference type="Pfam" id="PF03652">
    <property type="entry name" value="RuvX"/>
    <property type="match status" value="1"/>
</dbReference>
<dbReference type="SMART" id="SM00732">
    <property type="entry name" value="YqgFc"/>
    <property type="match status" value="1"/>
</dbReference>
<dbReference type="SUPFAM" id="SSF53098">
    <property type="entry name" value="Ribonuclease H-like"/>
    <property type="match status" value="1"/>
</dbReference>
<evidence type="ECO:0000255" key="1">
    <source>
        <dbReference type="HAMAP-Rule" id="MF_00651"/>
    </source>
</evidence>
<proteinExistence type="inferred from homology"/>
<protein>
    <recommendedName>
        <fullName evidence="1">Putative pre-16S rRNA nuclease</fullName>
        <ecNumber evidence="1">3.1.-.-</ecNumber>
    </recommendedName>
</protein>
<name>YQGF_SYNE7</name>